<sequence>MARKTPLNRIRNIGIAAHIDAGKTTTSERILFYTGVSHKIGEVHDGAATMDWMEQEKERGITITSAATTCFWKDHQINLIDTPGHVDFTIEVERSMRVLDGAVSVFCSVGGVQPQSETVWRQANKYGVPRIVFVNKMDRIGANFYSVENQIKQRLKANPVPINIPIGAEDTFIGVIDLVQMKAIVWNNETMGAKYDVEEIPSDLLEKAKQYREKLVEAVAEQDEALMEKYLGGEELSIEEIKKGIKTGCLNMSLVPMLCGSSFKNKGVQTLLDAVIDYLPAPTEVVDIKGIDPKTEEEVFVKSSDDGEFAGLAFKIMTDPFVGQLTFVRVYRGNLESGSYVYNSTKDKKERVGRLLKMHSNKREDIKEVYAGEICAFVGLKDTLTGDTLCDEKNAVVLERMEFPEPVIHIAVEPKTKADQEKMGVALGKLAEEDPSFRVMTQEETGQTLIGGMGELHLEIIVDRLKREFKVEAEIGQPQVAFRETIRSSVSKEHKYAKQSGGRGQYGHVFIKLEPKEPGSGYEFVNEISGGVIPKEYIPAVDKGIQEAMQNGVLAGYPVVDFKVTLYDGSYHDVDSSEMAFKIAGSMAFKEASRAANPVLLEPMMKVEVEVPEEYMGDVIGDLNRRRGQINSMDDRLGLKIVNAFVPLVEMFGYSTDLRSATQGRGTYSMEFDHYGEVPSNIAKEIVEKRKG</sequence>
<accession>B2UUV6</accession>
<feature type="chain" id="PRO_1000091721" description="Elongation factor G">
    <location>
        <begin position="1"/>
        <end position="692"/>
    </location>
</feature>
<feature type="domain" description="tr-type G">
    <location>
        <begin position="8"/>
        <end position="283"/>
    </location>
</feature>
<feature type="binding site" evidence="1">
    <location>
        <begin position="17"/>
        <end position="24"/>
    </location>
    <ligand>
        <name>GTP</name>
        <dbReference type="ChEBI" id="CHEBI:37565"/>
    </ligand>
</feature>
<feature type="binding site" evidence="1">
    <location>
        <begin position="81"/>
        <end position="85"/>
    </location>
    <ligand>
        <name>GTP</name>
        <dbReference type="ChEBI" id="CHEBI:37565"/>
    </ligand>
</feature>
<feature type="binding site" evidence="1">
    <location>
        <begin position="135"/>
        <end position="138"/>
    </location>
    <ligand>
        <name>GTP</name>
        <dbReference type="ChEBI" id="CHEBI:37565"/>
    </ligand>
</feature>
<evidence type="ECO:0000255" key="1">
    <source>
        <dbReference type="HAMAP-Rule" id="MF_00054"/>
    </source>
</evidence>
<dbReference type="EMBL" id="CP001072">
    <property type="protein sequence ID" value="ACD48638.1"/>
    <property type="molecule type" value="Genomic_DNA"/>
</dbReference>
<dbReference type="RefSeq" id="WP_000101894.1">
    <property type="nucleotide sequence ID" value="NC_010698.2"/>
</dbReference>
<dbReference type="SMR" id="B2UUV6"/>
<dbReference type="KEGG" id="hps:HPSH_06180"/>
<dbReference type="HOGENOM" id="CLU_002794_4_1_7"/>
<dbReference type="GO" id="GO:0005737">
    <property type="term" value="C:cytoplasm"/>
    <property type="evidence" value="ECO:0007669"/>
    <property type="project" value="UniProtKB-SubCell"/>
</dbReference>
<dbReference type="GO" id="GO:0005525">
    <property type="term" value="F:GTP binding"/>
    <property type="evidence" value="ECO:0007669"/>
    <property type="project" value="UniProtKB-UniRule"/>
</dbReference>
<dbReference type="GO" id="GO:0003924">
    <property type="term" value="F:GTPase activity"/>
    <property type="evidence" value="ECO:0007669"/>
    <property type="project" value="InterPro"/>
</dbReference>
<dbReference type="GO" id="GO:0003746">
    <property type="term" value="F:translation elongation factor activity"/>
    <property type="evidence" value="ECO:0007669"/>
    <property type="project" value="UniProtKB-UniRule"/>
</dbReference>
<dbReference type="GO" id="GO:0032790">
    <property type="term" value="P:ribosome disassembly"/>
    <property type="evidence" value="ECO:0007669"/>
    <property type="project" value="TreeGrafter"/>
</dbReference>
<dbReference type="CDD" id="cd01886">
    <property type="entry name" value="EF-G"/>
    <property type="match status" value="1"/>
</dbReference>
<dbReference type="CDD" id="cd16262">
    <property type="entry name" value="EFG_III"/>
    <property type="match status" value="1"/>
</dbReference>
<dbReference type="CDD" id="cd01434">
    <property type="entry name" value="EFG_mtEFG1_IV"/>
    <property type="match status" value="1"/>
</dbReference>
<dbReference type="CDD" id="cd03713">
    <property type="entry name" value="EFG_mtEFG_C"/>
    <property type="match status" value="1"/>
</dbReference>
<dbReference type="CDD" id="cd04088">
    <property type="entry name" value="EFG_mtEFG_II"/>
    <property type="match status" value="1"/>
</dbReference>
<dbReference type="FunFam" id="2.40.30.10:FF:000006">
    <property type="entry name" value="Elongation factor G"/>
    <property type="match status" value="1"/>
</dbReference>
<dbReference type="FunFam" id="3.30.230.10:FF:000003">
    <property type="entry name" value="Elongation factor G"/>
    <property type="match status" value="1"/>
</dbReference>
<dbReference type="FunFam" id="3.30.70.240:FF:000001">
    <property type="entry name" value="Elongation factor G"/>
    <property type="match status" value="1"/>
</dbReference>
<dbReference type="FunFam" id="3.30.70.870:FF:000001">
    <property type="entry name" value="Elongation factor G"/>
    <property type="match status" value="1"/>
</dbReference>
<dbReference type="FunFam" id="3.40.50.300:FF:000029">
    <property type="entry name" value="Elongation factor G"/>
    <property type="match status" value="1"/>
</dbReference>
<dbReference type="Gene3D" id="3.30.230.10">
    <property type="match status" value="1"/>
</dbReference>
<dbReference type="Gene3D" id="3.30.70.240">
    <property type="match status" value="1"/>
</dbReference>
<dbReference type="Gene3D" id="3.30.70.870">
    <property type="entry name" value="Elongation Factor G (Translational Gtpase), domain 3"/>
    <property type="match status" value="1"/>
</dbReference>
<dbReference type="Gene3D" id="3.40.50.300">
    <property type="entry name" value="P-loop containing nucleotide triphosphate hydrolases"/>
    <property type="match status" value="1"/>
</dbReference>
<dbReference type="Gene3D" id="2.40.30.10">
    <property type="entry name" value="Translation factors"/>
    <property type="match status" value="1"/>
</dbReference>
<dbReference type="HAMAP" id="MF_00054_B">
    <property type="entry name" value="EF_G_EF_2_B"/>
    <property type="match status" value="1"/>
</dbReference>
<dbReference type="InterPro" id="IPR053905">
    <property type="entry name" value="EF-G-like_DII"/>
</dbReference>
<dbReference type="InterPro" id="IPR041095">
    <property type="entry name" value="EFG_II"/>
</dbReference>
<dbReference type="InterPro" id="IPR009022">
    <property type="entry name" value="EFG_III"/>
</dbReference>
<dbReference type="InterPro" id="IPR035647">
    <property type="entry name" value="EFG_III/V"/>
</dbReference>
<dbReference type="InterPro" id="IPR047872">
    <property type="entry name" value="EFG_IV"/>
</dbReference>
<dbReference type="InterPro" id="IPR035649">
    <property type="entry name" value="EFG_V"/>
</dbReference>
<dbReference type="InterPro" id="IPR000640">
    <property type="entry name" value="EFG_V-like"/>
</dbReference>
<dbReference type="InterPro" id="IPR031157">
    <property type="entry name" value="G_TR_CS"/>
</dbReference>
<dbReference type="InterPro" id="IPR027417">
    <property type="entry name" value="P-loop_NTPase"/>
</dbReference>
<dbReference type="InterPro" id="IPR020568">
    <property type="entry name" value="Ribosomal_Su5_D2-typ_SF"/>
</dbReference>
<dbReference type="InterPro" id="IPR014721">
    <property type="entry name" value="Ribsml_uS5_D2-typ_fold_subgr"/>
</dbReference>
<dbReference type="InterPro" id="IPR005225">
    <property type="entry name" value="Small_GTP-bd"/>
</dbReference>
<dbReference type="InterPro" id="IPR000795">
    <property type="entry name" value="T_Tr_GTP-bd_dom"/>
</dbReference>
<dbReference type="InterPro" id="IPR009000">
    <property type="entry name" value="Transl_B-barrel_sf"/>
</dbReference>
<dbReference type="InterPro" id="IPR004540">
    <property type="entry name" value="Transl_elong_EFG/EF2"/>
</dbReference>
<dbReference type="InterPro" id="IPR005517">
    <property type="entry name" value="Transl_elong_EFG/EF2_IV"/>
</dbReference>
<dbReference type="NCBIfam" id="TIGR00484">
    <property type="entry name" value="EF-G"/>
    <property type="match status" value="1"/>
</dbReference>
<dbReference type="NCBIfam" id="NF009379">
    <property type="entry name" value="PRK12740.1-3"/>
    <property type="match status" value="1"/>
</dbReference>
<dbReference type="NCBIfam" id="NF009381">
    <property type="entry name" value="PRK12740.1-5"/>
    <property type="match status" value="1"/>
</dbReference>
<dbReference type="NCBIfam" id="TIGR00231">
    <property type="entry name" value="small_GTP"/>
    <property type="match status" value="1"/>
</dbReference>
<dbReference type="PANTHER" id="PTHR43261:SF1">
    <property type="entry name" value="RIBOSOME-RELEASING FACTOR 2, MITOCHONDRIAL"/>
    <property type="match status" value="1"/>
</dbReference>
<dbReference type="PANTHER" id="PTHR43261">
    <property type="entry name" value="TRANSLATION ELONGATION FACTOR G-RELATED"/>
    <property type="match status" value="1"/>
</dbReference>
<dbReference type="Pfam" id="PF22042">
    <property type="entry name" value="EF-G_D2"/>
    <property type="match status" value="1"/>
</dbReference>
<dbReference type="Pfam" id="PF00679">
    <property type="entry name" value="EFG_C"/>
    <property type="match status" value="1"/>
</dbReference>
<dbReference type="Pfam" id="PF14492">
    <property type="entry name" value="EFG_III"/>
    <property type="match status" value="1"/>
</dbReference>
<dbReference type="Pfam" id="PF03764">
    <property type="entry name" value="EFG_IV"/>
    <property type="match status" value="1"/>
</dbReference>
<dbReference type="Pfam" id="PF00009">
    <property type="entry name" value="GTP_EFTU"/>
    <property type="match status" value="1"/>
</dbReference>
<dbReference type="PRINTS" id="PR00315">
    <property type="entry name" value="ELONGATNFCT"/>
</dbReference>
<dbReference type="SMART" id="SM00838">
    <property type="entry name" value="EFG_C"/>
    <property type="match status" value="1"/>
</dbReference>
<dbReference type="SMART" id="SM00889">
    <property type="entry name" value="EFG_IV"/>
    <property type="match status" value="1"/>
</dbReference>
<dbReference type="SUPFAM" id="SSF54980">
    <property type="entry name" value="EF-G C-terminal domain-like"/>
    <property type="match status" value="2"/>
</dbReference>
<dbReference type="SUPFAM" id="SSF52540">
    <property type="entry name" value="P-loop containing nucleoside triphosphate hydrolases"/>
    <property type="match status" value="1"/>
</dbReference>
<dbReference type="SUPFAM" id="SSF54211">
    <property type="entry name" value="Ribosomal protein S5 domain 2-like"/>
    <property type="match status" value="1"/>
</dbReference>
<dbReference type="SUPFAM" id="SSF50447">
    <property type="entry name" value="Translation proteins"/>
    <property type="match status" value="1"/>
</dbReference>
<dbReference type="PROSITE" id="PS00301">
    <property type="entry name" value="G_TR_1"/>
    <property type="match status" value="1"/>
</dbReference>
<dbReference type="PROSITE" id="PS51722">
    <property type="entry name" value="G_TR_2"/>
    <property type="match status" value="1"/>
</dbReference>
<reference key="1">
    <citation type="submission" date="2008-05" db="EMBL/GenBank/DDBJ databases">
        <title>Genome sequence of Helicobacter pylori from the remote Amazon: traces of Asian ancestry of the first Americans.</title>
        <authorList>
            <person name="Kersulyte D."/>
            <person name="Kalia A."/>
            <person name="Gilman R.H."/>
            <person name="Berg D.E."/>
        </authorList>
    </citation>
    <scope>NUCLEOTIDE SEQUENCE [LARGE SCALE GENOMIC DNA]</scope>
    <source>
        <strain>Shi470</strain>
    </source>
</reference>
<proteinExistence type="inferred from homology"/>
<gene>
    <name evidence="1" type="primary">fusA</name>
    <name type="ordered locus">HPSH_06180</name>
</gene>
<organism>
    <name type="scientific">Helicobacter pylori (strain Shi470)</name>
    <dbReference type="NCBI Taxonomy" id="512562"/>
    <lineage>
        <taxon>Bacteria</taxon>
        <taxon>Pseudomonadati</taxon>
        <taxon>Campylobacterota</taxon>
        <taxon>Epsilonproteobacteria</taxon>
        <taxon>Campylobacterales</taxon>
        <taxon>Helicobacteraceae</taxon>
        <taxon>Helicobacter</taxon>
    </lineage>
</organism>
<keyword id="KW-0963">Cytoplasm</keyword>
<keyword id="KW-0251">Elongation factor</keyword>
<keyword id="KW-0342">GTP-binding</keyword>
<keyword id="KW-0547">Nucleotide-binding</keyword>
<keyword id="KW-0648">Protein biosynthesis</keyword>
<name>EFG_HELPS</name>
<comment type="function">
    <text evidence="1">Catalyzes the GTP-dependent ribosomal translocation step during translation elongation. During this step, the ribosome changes from the pre-translocational (PRE) to the post-translocational (POST) state as the newly formed A-site-bound peptidyl-tRNA and P-site-bound deacylated tRNA move to the P and E sites, respectively. Catalyzes the coordinated movement of the two tRNA molecules, the mRNA and conformational changes in the ribosome.</text>
</comment>
<comment type="subcellular location">
    <subcellularLocation>
        <location evidence="1">Cytoplasm</location>
    </subcellularLocation>
</comment>
<comment type="similarity">
    <text evidence="1">Belongs to the TRAFAC class translation factor GTPase superfamily. Classic translation factor GTPase family. EF-G/EF-2 subfamily.</text>
</comment>
<protein>
    <recommendedName>
        <fullName evidence="1">Elongation factor G</fullName>
        <shortName evidence="1">EF-G</shortName>
    </recommendedName>
</protein>